<feature type="chain" id="PRO_1000046373" description="Urease subunit gamma">
    <location>
        <begin position="1"/>
        <end position="100"/>
    </location>
</feature>
<name>URE3_SYNR3</name>
<keyword id="KW-0963">Cytoplasm</keyword>
<keyword id="KW-0378">Hydrolase</keyword>
<keyword id="KW-1185">Reference proteome</keyword>
<proteinExistence type="inferred from homology"/>
<comment type="catalytic activity">
    <reaction evidence="1">
        <text>urea + 2 H2O + H(+) = hydrogencarbonate + 2 NH4(+)</text>
        <dbReference type="Rhea" id="RHEA:20557"/>
        <dbReference type="ChEBI" id="CHEBI:15377"/>
        <dbReference type="ChEBI" id="CHEBI:15378"/>
        <dbReference type="ChEBI" id="CHEBI:16199"/>
        <dbReference type="ChEBI" id="CHEBI:17544"/>
        <dbReference type="ChEBI" id="CHEBI:28938"/>
        <dbReference type="EC" id="3.5.1.5"/>
    </reaction>
</comment>
<comment type="pathway">
    <text evidence="1">Nitrogen metabolism; urea degradation; CO(2) and NH(3) from urea (urease route): step 1/1.</text>
</comment>
<comment type="subunit">
    <text evidence="1">Heterotrimer of UreA (gamma), UreB (beta) and UreC (alpha) subunits. Three heterotrimers associate to form the active enzyme.</text>
</comment>
<comment type="subcellular location">
    <subcellularLocation>
        <location evidence="1">Cytoplasm</location>
    </subcellularLocation>
</comment>
<comment type="similarity">
    <text evidence="1">Belongs to the urease gamma subunit family.</text>
</comment>
<reference key="1">
    <citation type="submission" date="2006-05" db="EMBL/GenBank/DDBJ databases">
        <authorList>
            <consortium name="Genoscope"/>
        </authorList>
    </citation>
    <scope>NUCLEOTIDE SEQUENCE [LARGE SCALE GENOMIC DNA]</scope>
    <source>
        <strain>RCC307</strain>
    </source>
</reference>
<dbReference type="EC" id="3.5.1.5" evidence="1"/>
<dbReference type="EMBL" id="CT978603">
    <property type="protein sequence ID" value="CAK29364.1"/>
    <property type="molecule type" value="Genomic_DNA"/>
</dbReference>
<dbReference type="SMR" id="A5GWV5"/>
<dbReference type="STRING" id="316278.SynRCC307_2461"/>
<dbReference type="KEGG" id="syr:SynRCC307_2461"/>
<dbReference type="eggNOG" id="COG0831">
    <property type="taxonomic scope" value="Bacteria"/>
</dbReference>
<dbReference type="HOGENOM" id="CLU_145825_1_0_3"/>
<dbReference type="OrthoDB" id="9793527at2"/>
<dbReference type="UniPathway" id="UPA00258">
    <property type="reaction ID" value="UER00370"/>
</dbReference>
<dbReference type="Proteomes" id="UP000001115">
    <property type="component" value="Chromosome"/>
</dbReference>
<dbReference type="GO" id="GO:0005737">
    <property type="term" value="C:cytoplasm"/>
    <property type="evidence" value="ECO:0007669"/>
    <property type="project" value="UniProtKB-SubCell"/>
</dbReference>
<dbReference type="GO" id="GO:0016151">
    <property type="term" value="F:nickel cation binding"/>
    <property type="evidence" value="ECO:0007669"/>
    <property type="project" value="InterPro"/>
</dbReference>
<dbReference type="GO" id="GO:0009039">
    <property type="term" value="F:urease activity"/>
    <property type="evidence" value="ECO:0007669"/>
    <property type="project" value="UniProtKB-UniRule"/>
</dbReference>
<dbReference type="GO" id="GO:0043419">
    <property type="term" value="P:urea catabolic process"/>
    <property type="evidence" value="ECO:0007669"/>
    <property type="project" value="UniProtKB-UniRule"/>
</dbReference>
<dbReference type="CDD" id="cd00390">
    <property type="entry name" value="Urease_gamma"/>
    <property type="match status" value="1"/>
</dbReference>
<dbReference type="Gene3D" id="3.30.280.10">
    <property type="entry name" value="Urease, gamma-like subunit"/>
    <property type="match status" value="1"/>
</dbReference>
<dbReference type="HAMAP" id="MF_00739">
    <property type="entry name" value="Urease_gamma"/>
    <property type="match status" value="1"/>
</dbReference>
<dbReference type="InterPro" id="IPR012010">
    <property type="entry name" value="Urease_gamma"/>
</dbReference>
<dbReference type="InterPro" id="IPR002026">
    <property type="entry name" value="Urease_gamma/gamma-beta_su"/>
</dbReference>
<dbReference type="InterPro" id="IPR036463">
    <property type="entry name" value="Urease_gamma_sf"/>
</dbReference>
<dbReference type="InterPro" id="IPR050069">
    <property type="entry name" value="Urease_subunit"/>
</dbReference>
<dbReference type="NCBIfam" id="NF009712">
    <property type="entry name" value="PRK13241.1"/>
    <property type="match status" value="1"/>
</dbReference>
<dbReference type="NCBIfam" id="TIGR00193">
    <property type="entry name" value="urease_gam"/>
    <property type="match status" value="1"/>
</dbReference>
<dbReference type="PANTHER" id="PTHR33569">
    <property type="entry name" value="UREASE"/>
    <property type="match status" value="1"/>
</dbReference>
<dbReference type="PANTHER" id="PTHR33569:SF1">
    <property type="entry name" value="UREASE"/>
    <property type="match status" value="1"/>
</dbReference>
<dbReference type="Pfam" id="PF00547">
    <property type="entry name" value="Urease_gamma"/>
    <property type="match status" value="1"/>
</dbReference>
<dbReference type="PIRSF" id="PIRSF001223">
    <property type="entry name" value="Urease_gamma"/>
    <property type="match status" value="1"/>
</dbReference>
<dbReference type="SUPFAM" id="SSF54111">
    <property type="entry name" value="Urease, gamma-subunit"/>
    <property type="match status" value="1"/>
</dbReference>
<sequence>MHLSPQEKDKLLVVTAALLAERRLQRGLKLNHPEAVAFLSLQILEGARDGTTVAELMQVGSTWLSRHQVMDGVAELVSEVQMEATFPDGTKLVTLHQPIR</sequence>
<protein>
    <recommendedName>
        <fullName evidence="1">Urease subunit gamma</fullName>
        <ecNumber evidence="1">3.5.1.5</ecNumber>
    </recommendedName>
    <alternativeName>
        <fullName evidence="1">Urea amidohydrolase subunit gamma</fullName>
    </alternativeName>
</protein>
<evidence type="ECO:0000255" key="1">
    <source>
        <dbReference type="HAMAP-Rule" id="MF_00739"/>
    </source>
</evidence>
<gene>
    <name evidence="1" type="primary">ureA</name>
    <name type="ordered locus">SynRCC307_2461</name>
</gene>
<accession>A5GWV5</accession>
<organism>
    <name type="scientific">Synechococcus sp. (strain RCC307)</name>
    <dbReference type="NCBI Taxonomy" id="316278"/>
    <lineage>
        <taxon>Bacteria</taxon>
        <taxon>Bacillati</taxon>
        <taxon>Cyanobacteriota</taxon>
        <taxon>Cyanophyceae</taxon>
        <taxon>Synechococcales</taxon>
        <taxon>Synechococcaceae</taxon>
        <taxon>Synechococcus</taxon>
    </lineage>
</organism>